<keyword id="KW-0067">ATP-binding</keyword>
<keyword id="KW-0963">Cytoplasm</keyword>
<keyword id="KW-0324">Glycolysis</keyword>
<keyword id="KW-0418">Kinase</keyword>
<keyword id="KW-0547">Nucleotide-binding</keyword>
<keyword id="KW-1185">Reference proteome</keyword>
<keyword id="KW-0808">Transferase</keyword>
<feature type="chain" id="PRO_1000057988" description="Phosphoglycerate kinase">
    <location>
        <begin position="1"/>
        <end position="387"/>
    </location>
</feature>
<feature type="binding site" evidence="1">
    <location>
        <begin position="21"/>
        <end position="23"/>
    </location>
    <ligand>
        <name>substrate</name>
    </ligand>
</feature>
<feature type="binding site" evidence="1">
    <location>
        <position position="36"/>
    </location>
    <ligand>
        <name>substrate</name>
    </ligand>
</feature>
<feature type="binding site" evidence="1">
    <location>
        <begin position="59"/>
        <end position="62"/>
    </location>
    <ligand>
        <name>substrate</name>
    </ligand>
</feature>
<feature type="binding site" evidence="1">
    <location>
        <position position="113"/>
    </location>
    <ligand>
        <name>substrate</name>
    </ligand>
</feature>
<feature type="binding site" evidence="1">
    <location>
        <position position="146"/>
    </location>
    <ligand>
        <name>substrate</name>
    </ligand>
</feature>
<feature type="binding site" evidence="1">
    <location>
        <position position="197"/>
    </location>
    <ligand>
        <name>ATP</name>
        <dbReference type="ChEBI" id="CHEBI:30616"/>
    </ligand>
</feature>
<feature type="binding site" evidence="1">
    <location>
        <position position="314"/>
    </location>
    <ligand>
        <name>ATP</name>
        <dbReference type="ChEBI" id="CHEBI:30616"/>
    </ligand>
</feature>
<feature type="binding site" evidence="1">
    <location>
        <begin position="340"/>
        <end position="343"/>
    </location>
    <ligand>
        <name>ATP</name>
        <dbReference type="ChEBI" id="CHEBI:30616"/>
    </ligand>
</feature>
<protein>
    <recommendedName>
        <fullName evidence="1">Phosphoglycerate kinase</fullName>
        <ecNumber evidence="1">2.7.2.3</ecNumber>
    </recommendedName>
</protein>
<proteinExistence type="inferred from homology"/>
<organism>
    <name type="scientific">Pectobacterium atrosepticum (strain SCRI 1043 / ATCC BAA-672)</name>
    <name type="common">Erwinia carotovora subsp. atroseptica</name>
    <dbReference type="NCBI Taxonomy" id="218491"/>
    <lineage>
        <taxon>Bacteria</taxon>
        <taxon>Pseudomonadati</taxon>
        <taxon>Pseudomonadota</taxon>
        <taxon>Gammaproteobacteria</taxon>
        <taxon>Enterobacterales</taxon>
        <taxon>Pectobacteriaceae</taxon>
        <taxon>Pectobacterium</taxon>
    </lineage>
</organism>
<sequence length="387" mass="41190">MSVIKMTDLDLAGKRVLIRADLNVPVKEGKVTSDARIRASLPTIEIALKQGARVMVTSHLGRPTEGEYNEDFSLLPVVDYLKEKLSSPVRLAKDYLDGVDVAEGELVVLENVRFNKGEKKDDEVLSKKYAALCDVFVMDAFGTAHRAQASTHGVGKFATIACAGPLLSGELEALGKALSKPARPMVAIVGGSKVSTKLTVLDSLSKIADQLIVGGGIANTFVAAQGHNVGKSLYEADLISEAKKLLETCDIPVPSDVRVASEFSETAAATLKSVTEIKDEEQILDLGDVSAERLAEILKNAKTILWNGPVGVFEFPNFRKGTEIIARAIADSDAFSIAGGGDTLAAIDLFGIADKISYISTGGGAFLEFVEGKKLPAVVMLEERAKQ</sequence>
<evidence type="ECO:0000255" key="1">
    <source>
        <dbReference type="HAMAP-Rule" id="MF_00145"/>
    </source>
</evidence>
<dbReference type="EC" id="2.7.2.3" evidence="1"/>
<dbReference type="EMBL" id="BX950851">
    <property type="protein sequence ID" value="CAG76810.1"/>
    <property type="molecule type" value="Genomic_DNA"/>
</dbReference>
<dbReference type="RefSeq" id="WP_011095409.1">
    <property type="nucleotide sequence ID" value="NC_004547.2"/>
</dbReference>
<dbReference type="SMR" id="Q6D087"/>
<dbReference type="STRING" id="218491.ECA3912"/>
<dbReference type="KEGG" id="eca:ECA3912"/>
<dbReference type="PATRIC" id="fig|218491.5.peg.3975"/>
<dbReference type="eggNOG" id="COG0126">
    <property type="taxonomic scope" value="Bacteria"/>
</dbReference>
<dbReference type="HOGENOM" id="CLU_025427_0_2_6"/>
<dbReference type="OrthoDB" id="9808460at2"/>
<dbReference type="UniPathway" id="UPA00109">
    <property type="reaction ID" value="UER00185"/>
</dbReference>
<dbReference type="Proteomes" id="UP000007966">
    <property type="component" value="Chromosome"/>
</dbReference>
<dbReference type="GO" id="GO:0005829">
    <property type="term" value="C:cytosol"/>
    <property type="evidence" value="ECO:0007669"/>
    <property type="project" value="TreeGrafter"/>
</dbReference>
<dbReference type="GO" id="GO:0043531">
    <property type="term" value="F:ADP binding"/>
    <property type="evidence" value="ECO:0007669"/>
    <property type="project" value="TreeGrafter"/>
</dbReference>
<dbReference type="GO" id="GO:0005524">
    <property type="term" value="F:ATP binding"/>
    <property type="evidence" value="ECO:0007669"/>
    <property type="project" value="UniProtKB-KW"/>
</dbReference>
<dbReference type="GO" id="GO:0004618">
    <property type="term" value="F:phosphoglycerate kinase activity"/>
    <property type="evidence" value="ECO:0007669"/>
    <property type="project" value="UniProtKB-UniRule"/>
</dbReference>
<dbReference type="GO" id="GO:0006094">
    <property type="term" value="P:gluconeogenesis"/>
    <property type="evidence" value="ECO:0007669"/>
    <property type="project" value="TreeGrafter"/>
</dbReference>
<dbReference type="GO" id="GO:0006096">
    <property type="term" value="P:glycolytic process"/>
    <property type="evidence" value="ECO:0007669"/>
    <property type="project" value="UniProtKB-UniRule"/>
</dbReference>
<dbReference type="FunFam" id="3.40.50.1260:FF:000001">
    <property type="entry name" value="Phosphoglycerate kinase"/>
    <property type="match status" value="1"/>
</dbReference>
<dbReference type="FunFam" id="3.40.50.1260:FF:000002">
    <property type="entry name" value="Phosphoglycerate kinase"/>
    <property type="match status" value="1"/>
</dbReference>
<dbReference type="Gene3D" id="3.40.50.1260">
    <property type="entry name" value="Phosphoglycerate kinase, N-terminal domain"/>
    <property type="match status" value="2"/>
</dbReference>
<dbReference type="HAMAP" id="MF_00145">
    <property type="entry name" value="Phosphoglyc_kinase"/>
    <property type="match status" value="1"/>
</dbReference>
<dbReference type="InterPro" id="IPR001576">
    <property type="entry name" value="Phosphoglycerate_kinase"/>
</dbReference>
<dbReference type="InterPro" id="IPR015911">
    <property type="entry name" value="Phosphoglycerate_kinase_CS"/>
</dbReference>
<dbReference type="InterPro" id="IPR015824">
    <property type="entry name" value="Phosphoglycerate_kinase_N"/>
</dbReference>
<dbReference type="InterPro" id="IPR036043">
    <property type="entry name" value="Phosphoglycerate_kinase_sf"/>
</dbReference>
<dbReference type="PANTHER" id="PTHR11406">
    <property type="entry name" value="PHOSPHOGLYCERATE KINASE"/>
    <property type="match status" value="1"/>
</dbReference>
<dbReference type="PANTHER" id="PTHR11406:SF23">
    <property type="entry name" value="PHOSPHOGLYCERATE KINASE 1, CHLOROPLASTIC-RELATED"/>
    <property type="match status" value="1"/>
</dbReference>
<dbReference type="Pfam" id="PF00162">
    <property type="entry name" value="PGK"/>
    <property type="match status" value="1"/>
</dbReference>
<dbReference type="PIRSF" id="PIRSF000724">
    <property type="entry name" value="Pgk"/>
    <property type="match status" value="1"/>
</dbReference>
<dbReference type="PRINTS" id="PR00477">
    <property type="entry name" value="PHGLYCKINASE"/>
</dbReference>
<dbReference type="SUPFAM" id="SSF53748">
    <property type="entry name" value="Phosphoglycerate kinase"/>
    <property type="match status" value="1"/>
</dbReference>
<dbReference type="PROSITE" id="PS00111">
    <property type="entry name" value="PGLYCERATE_KINASE"/>
    <property type="match status" value="1"/>
</dbReference>
<comment type="catalytic activity">
    <reaction evidence="1">
        <text>(2R)-3-phosphoglycerate + ATP = (2R)-3-phospho-glyceroyl phosphate + ADP</text>
        <dbReference type="Rhea" id="RHEA:14801"/>
        <dbReference type="ChEBI" id="CHEBI:30616"/>
        <dbReference type="ChEBI" id="CHEBI:57604"/>
        <dbReference type="ChEBI" id="CHEBI:58272"/>
        <dbReference type="ChEBI" id="CHEBI:456216"/>
        <dbReference type="EC" id="2.7.2.3"/>
    </reaction>
</comment>
<comment type="pathway">
    <text evidence="1">Carbohydrate degradation; glycolysis; pyruvate from D-glyceraldehyde 3-phosphate: step 2/5.</text>
</comment>
<comment type="subunit">
    <text evidence="1">Monomer.</text>
</comment>
<comment type="subcellular location">
    <subcellularLocation>
        <location evidence="1">Cytoplasm</location>
    </subcellularLocation>
</comment>
<comment type="similarity">
    <text evidence="1">Belongs to the phosphoglycerate kinase family.</text>
</comment>
<gene>
    <name evidence="1" type="primary">pgk</name>
    <name type="ordered locus">ECA3912</name>
</gene>
<accession>Q6D087</accession>
<name>PGK_PECAS</name>
<reference key="1">
    <citation type="journal article" date="2004" name="Proc. Natl. Acad. Sci. U.S.A.">
        <title>Genome sequence of the enterobacterial phytopathogen Erwinia carotovora subsp. atroseptica and characterization of virulence factors.</title>
        <authorList>
            <person name="Bell K.S."/>
            <person name="Sebaihia M."/>
            <person name="Pritchard L."/>
            <person name="Holden M.T.G."/>
            <person name="Hyman L.J."/>
            <person name="Holeva M.C."/>
            <person name="Thomson N.R."/>
            <person name="Bentley S.D."/>
            <person name="Churcher L.J.C."/>
            <person name="Mungall K."/>
            <person name="Atkin R."/>
            <person name="Bason N."/>
            <person name="Brooks K."/>
            <person name="Chillingworth T."/>
            <person name="Clark K."/>
            <person name="Doggett J."/>
            <person name="Fraser A."/>
            <person name="Hance Z."/>
            <person name="Hauser H."/>
            <person name="Jagels K."/>
            <person name="Moule S."/>
            <person name="Norbertczak H."/>
            <person name="Ormond D."/>
            <person name="Price C."/>
            <person name="Quail M.A."/>
            <person name="Sanders M."/>
            <person name="Walker D."/>
            <person name="Whitehead S."/>
            <person name="Salmond G.P.C."/>
            <person name="Birch P.R.J."/>
            <person name="Parkhill J."/>
            <person name="Toth I.K."/>
        </authorList>
    </citation>
    <scope>NUCLEOTIDE SEQUENCE [LARGE SCALE GENOMIC DNA]</scope>
    <source>
        <strain>SCRI 1043 / ATCC BAA-672</strain>
    </source>
</reference>